<protein>
    <recommendedName>
        <fullName>Guanine nucleotide-binding protein G(I)/G(S)/G(T) subunit beta-2</fullName>
    </recommendedName>
    <alternativeName>
        <fullName>G protein subunit beta-2</fullName>
    </alternativeName>
    <alternativeName>
        <fullName>Transducin beta chain 2</fullName>
    </alternativeName>
</protein>
<gene>
    <name type="primary">Gnb2</name>
</gene>
<keyword id="KW-0007">Acetylation</keyword>
<keyword id="KW-1003">Cell membrane</keyword>
<keyword id="KW-0963">Cytoplasm</keyword>
<keyword id="KW-0903">Direct protein sequencing</keyword>
<keyword id="KW-0472">Membrane</keyword>
<keyword id="KW-0597">Phosphoprotein</keyword>
<keyword id="KW-1185">Reference proteome</keyword>
<keyword id="KW-0677">Repeat</keyword>
<keyword id="KW-0807">Transducer</keyword>
<keyword id="KW-0853">WD repeat</keyword>
<feature type="initiator methionine" description="Removed" evidence="1">
    <location>
        <position position="1"/>
    </location>
</feature>
<feature type="chain" id="PRO_0000127696" description="Guanine nucleotide-binding protein G(I)/G(S)/G(T) subunit beta-2">
    <location>
        <begin position="2"/>
        <end position="340"/>
    </location>
</feature>
<feature type="repeat" description="WD 1">
    <location>
        <begin position="53"/>
        <end position="83"/>
    </location>
</feature>
<feature type="repeat" description="WD 2">
    <location>
        <begin position="95"/>
        <end position="125"/>
    </location>
</feature>
<feature type="repeat" description="WD 3">
    <location>
        <begin position="141"/>
        <end position="170"/>
    </location>
</feature>
<feature type="repeat" description="WD 4">
    <location>
        <begin position="182"/>
        <end position="212"/>
    </location>
</feature>
<feature type="repeat" description="WD 5">
    <location>
        <begin position="224"/>
        <end position="254"/>
    </location>
</feature>
<feature type="repeat" description="WD 6">
    <location>
        <begin position="268"/>
        <end position="298"/>
    </location>
</feature>
<feature type="repeat" description="WD 7">
    <location>
        <begin position="310"/>
        <end position="340"/>
    </location>
</feature>
<feature type="modified residue" description="N-acetylserine" evidence="1">
    <location>
        <position position="2"/>
    </location>
</feature>
<feature type="modified residue" description="Phosphotyrosine" evidence="4">
    <location>
        <position position="239"/>
    </location>
</feature>
<feature type="sequence conflict" description="In Ref. 1; AAC72250." evidence="3" ref="1">
    <original>A</original>
    <variation>G</variation>
    <location>
        <position position="106"/>
    </location>
</feature>
<feature type="sequence conflict" description="In Ref. 1; AAC72250." evidence="3" ref="1">
    <original>A</original>
    <variation>S</variation>
    <location>
        <position position="248"/>
    </location>
</feature>
<accession>P62880</accession>
<accession>P11016</accession>
<accession>P54312</accession>
<comment type="function">
    <text>Guanine nucleotide-binding proteins (G proteins) are involved as a modulator or transducer in various transmembrane signaling systems. The beta and gamma chains are required for the GTPase activity, for replacement of GDP by GTP, and for G protein-effector interaction.</text>
</comment>
<comment type="subunit">
    <text evidence="1">G proteins are composed of 3 units, alpha, beta and gamma. In this context, interacts with GNAI2 and GNG2 (By similarity). Interacts with ARHGEF18 and RASD2. Interacts with ATXN10. Interacts with SCN8A.</text>
</comment>
<comment type="subcellular location">
    <subcellularLocation>
        <location evidence="1">Cytoplasm</location>
        <location evidence="1">Perinuclear region</location>
    </subcellularLocation>
    <subcellularLocation>
        <location evidence="1">Cell membrane</location>
    </subcellularLocation>
</comment>
<comment type="developmental stage">
    <text evidence="2">Expressed in meiotically incompetent oocytes. Expression increases in fully grown meiotically competent oocytes. Expression then decreases during metaphase-II arrested eggs, one-cell embryo, two-cell embryo and eight-cell embryo stages, and increases again during blastocyst stage.</text>
</comment>
<comment type="similarity">
    <text evidence="3">Belongs to the WD repeat G protein beta family.</text>
</comment>
<proteinExistence type="evidence at protein level"/>
<dbReference type="EMBL" id="U34960">
    <property type="protein sequence ID" value="AAC72250.1"/>
    <property type="molecule type" value="mRNA"/>
</dbReference>
<dbReference type="EMBL" id="AB045007">
    <property type="protein sequence ID" value="BAB19816.1"/>
    <property type="molecule type" value="Genomic_DNA"/>
</dbReference>
<dbReference type="EMBL" id="AF312033">
    <property type="protein sequence ID" value="AAK28828.1"/>
    <property type="molecule type" value="Genomic_DNA"/>
</dbReference>
<dbReference type="EMBL" id="BC029077">
    <property type="protein sequence ID" value="AAH29077.1"/>
    <property type="molecule type" value="mRNA"/>
</dbReference>
<dbReference type="EMBL" id="BC059942">
    <property type="protein sequence ID" value="AAH59942.1"/>
    <property type="molecule type" value="mRNA"/>
</dbReference>
<dbReference type="EMBL" id="BC062178">
    <property type="protein sequence ID" value="AAH62178.1"/>
    <property type="molecule type" value="mRNA"/>
</dbReference>
<dbReference type="EMBL" id="U38505">
    <property type="protein sequence ID" value="AAB01736.1"/>
    <property type="molecule type" value="mRNA"/>
</dbReference>
<dbReference type="CCDS" id="CCDS19769.1"/>
<dbReference type="RefSeq" id="NP_034442.1">
    <property type="nucleotide sequence ID" value="NM_010312.5"/>
</dbReference>
<dbReference type="RefSeq" id="XP_006504616.1">
    <property type="nucleotide sequence ID" value="XM_006504553.5"/>
</dbReference>
<dbReference type="SMR" id="P62880"/>
<dbReference type="BioGRID" id="199977">
    <property type="interactions" value="33"/>
</dbReference>
<dbReference type="FunCoup" id="P62880">
    <property type="interactions" value="1945"/>
</dbReference>
<dbReference type="IntAct" id="P62880">
    <property type="interactions" value="8"/>
</dbReference>
<dbReference type="MINT" id="P62880"/>
<dbReference type="STRING" id="10090.ENSMUSP00000031726"/>
<dbReference type="GlyGen" id="P62880">
    <property type="glycosylation" value="1 site, 1 O-linked glycan (1 site)"/>
</dbReference>
<dbReference type="iPTMnet" id="P62880"/>
<dbReference type="PhosphoSitePlus" id="P62880"/>
<dbReference type="SwissPalm" id="P62880"/>
<dbReference type="REPRODUCTION-2DPAGE" id="IPI00162780"/>
<dbReference type="jPOST" id="P62880"/>
<dbReference type="PaxDb" id="10090-ENSMUSP00000031726"/>
<dbReference type="PeptideAtlas" id="P62880"/>
<dbReference type="ProteomicsDB" id="273416"/>
<dbReference type="Pumba" id="P62880"/>
<dbReference type="Antibodypedia" id="4100">
    <property type="antibodies" value="208 antibodies from 33 providers"/>
</dbReference>
<dbReference type="DNASU" id="14693"/>
<dbReference type="Ensembl" id="ENSMUST00000031726.15">
    <property type="protein sequence ID" value="ENSMUSP00000031726.9"/>
    <property type="gene ID" value="ENSMUSG00000029713.16"/>
</dbReference>
<dbReference type="Ensembl" id="ENSMUST00000150063.9">
    <property type="protein sequence ID" value="ENSMUSP00000129353.2"/>
    <property type="gene ID" value="ENSMUSG00000029713.16"/>
</dbReference>
<dbReference type="GeneID" id="14693"/>
<dbReference type="KEGG" id="mmu:14693"/>
<dbReference type="UCSC" id="uc009act.1">
    <property type="organism name" value="mouse"/>
</dbReference>
<dbReference type="AGR" id="MGI:95784"/>
<dbReference type="CTD" id="2783"/>
<dbReference type="MGI" id="MGI:95784">
    <property type="gene designation" value="Gnb2"/>
</dbReference>
<dbReference type="VEuPathDB" id="HostDB:ENSMUSG00000029713"/>
<dbReference type="eggNOG" id="KOG0286">
    <property type="taxonomic scope" value="Eukaryota"/>
</dbReference>
<dbReference type="GeneTree" id="ENSGT01000000214413"/>
<dbReference type="InParanoid" id="P62880"/>
<dbReference type="OrthoDB" id="4080at9989"/>
<dbReference type="PhylomeDB" id="P62880"/>
<dbReference type="TreeFam" id="TF106149"/>
<dbReference type="Reactome" id="R-MMU-1296041">
    <property type="pathway name" value="Activation of G protein gated Potassium channels"/>
</dbReference>
<dbReference type="Reactome" id="R-MMU-202040">
    <property type="pathway name" value="G-protein activation"/>
</dbReference>
<dbReference type="Reactome" id="R-MMU-381676">
    <property type="pathway name" value="Glucagon-like Peptide-1 (GLP1) regulates insulin secretion"/>
</dbReference>
<dbReference type="Reactome" id="R-MMU-392170">
    <property type="pathway name" value="ADP signalling through P2Y purinoceptor 12"/>
</dbReference>
<dbReference type="Reactome" id="R-MMU-392451">
    <property type="pathway name" value="G beta:gamma signalling through PI3Kgamma"/>
</dbReference>
<dbReference type="Reactome" id="R-MMU-392851">
    <property type="pathway name" value="Prostacyclin signalling through prostacyclin receptor"/>
</dbReference>
<dbReference type="Reactome" id="R-MMU-400042">
    <property type="pathway name" value="Adrenaline,noradrenaline inhibits insulin secretion"/>
</dbReference>
<dbReference type="Reactome" id="R-MMU-4086398">
    <property type="pathway name" value="Ca2+ pathway"/>
</dbReference>
<dbReference type="Reactome" id="R-MMU-416476">
    <property type="pathway name" value="G alpha (q) signalling events"/>
</dbReference>
<dbReference type="Reactome" id="R-MMU-416482">
    <property type="pathway name" value="G alpha (12/13) signalling events"/>
</dbReference>
<dbReference type="Reactome" id="R-MMU-418217">
    <property type="pathway name" value="G beta:gamma signalling through PLC beta"/>
</dbReference>
<dbReference type="Reactome" id="R-MMU-418555">
    <property type="pathway name" value="G alpha (s) signalling events"/>
</dbReference>
<dbReference type="Reactome" id="R-MMU-418592">
    <property type="pathway name" value="ADP signalling through P2Y purinoceptor 1"/>
</dbReference>
<dbReference type="Reactome" id="R-MMU-418594">
    <property type="pathway name" value="G alpha (i) signalling events"/>
</dbReference>
<dbReference type="Reactome" id="R-MMU-418597">
    <property type="pathway name" value="G alpha (z) signalling events"/>
</dbReference>
<dbReference type="Reactome" id="R-MMU-420092">
    <property type="pathway name" value="Glucagon-type ligand receptors"/>
</dbReference>
<dbReference type="Reactome" id="R-MMU-428930">
    <property type="pathway name" value="Thromboxane signalling through TP receptor"/>
</dbReference>
<dbReference type="Reactome" id="R-MMU-432040">
    <property type="pathway name" value="Vasopressin regulates renal water homeostasis via Aquaporins"/>
</dbReference>
<dbReference type="Reactome" id="R-MMU-456926">
    <property type="pathway name" value="Thrombin signalling through proteinase activated receptors (PARs)"/>
</dbReference>
<dbReference type="Reactome" id="R-MMU-500657">
    <property type="pathway name" value="Presynaptic function of Kainate receptors"/>
</dbReference>
<dbReference type="Reactome" id="R-MMU-6814122">
    <property type="pathway name" value="Cooperation of PDCL (PhLP1) and TRiC/CCT in G-protein beta folding"/>
</dbReference>
<dbReference type="Reactome" id="R-MMU-8964315">
    <property type="pathway name" value="G beta:gamma signalling through BTK"/>
</dbReference>
<dbReference type="Reactome" id="R-MMU-8964616">
    <property type="pathway name" value="G beta:gamma signalling through CDC42"/>
</dbReference>
<dbReference type="Reactome" id="R-MMU-9009391">
    <property type="pathway name" value="Extra-nuclear estrogen signaling"/>
</dbReference>
<dbReference type="Reactome" id="R-MMU-9634597">
    <property type="pathway name" value="GPER1 signaling"/>
</dbReference>
<dbReference type="Reactome" id="R-MMU-9856530">
    <property type="pathway name" value="High laminar flow shear stress activates signaling by PIEZO1 and PECAM1:CDH5:KDR in endothelial cells"/>
</dbReference>
<dbReference type="Reactome" id="R-MMU-997272">
    <property type="pathway name" value="Inhibition of voltage gated Ca2+ channels via Gbeta/gamma subunits"/>
</dbReference>
<dbReference type="BioGRID-ORCS" id="14693">
    <property type="hits" value="9 hits in 79 CRISPR screens"/>
</dbReference>
<dbReference type="ChiTaRS" id="Gnb2">
    <property type="organism name" value="mouse"/>
</dbReference>
<dbReference type="PRO" id="PR:P62880"/>
<dbReference type="Proteomes" id="UP000000589">
    <property type="component" value="Chromosome 5"/>
</dbReference>
<dbReference type="RNAct" id="P62880">
    <property type="molecule type" value="protein"/>
</dbReference>
<dbReference type="Bgee" id="ENSMUSG00000029713">
    <property type="expression patterns" value="Expressed in granulocyte and 66 other cell types or tissues"/>
</dbReference>
<dbReference type="ExpressionAtlas" id="P62880">
    <property type="expression patterns" value="baseline and differential"/>
</dbReference>
<dbReference type="GO" id="GO:0005834">
    <property type="term" value="C:heterotrimeric G-protein complex"/>
    <property type="evidence" value="ECO:0000266"/>
    <property type="project" value="MGI"/>
</dbReference>
<dbReference type="GO" id="GO:0043209">
    <property type="term" value="C:myelin sheath"/>
    <property type="evidence" value="ECO:0007005"/>
    <property type="project" value="UniProtKB"/>
</dbReference>
<dbReference type="GO" id="GO:0048471">
    <property type="term" value="C:perinuclear region of cytoplasm"/>
    <property type="evidence" value="ECO:0000250"/>
    <property type="project" value="UniProtKB"/>
</dbReference>
<dbReference type="GO" id="GO:0005886">
    <property type="term" value="C:plasma membrane"/>
    <property type="evidence" value="ECO:0000250"/>
    <property type="project" value="UniProtKB"/>
</dbReference>
<dbReference type="GO" id="GO:0045202">
    <property type="term" value="C:synapse"/>
    <property type="evidence" value="ECO:0000314"/>
    <property type="project" value="SynGO"/>
</dbReference>
<dbReference type="GO" id="GO:0003924">
    <property type="term" value="F:GTPase activity"/>
    <property type="evidence" value="ECO:0000266"/>
    <property type="project" value="MGI"/>
</dbReference>
<dbReference type="GO" id="GO:0051020">
    <property type="term" value="F:GTPase binding"/>
    <property type="evidence" value="ECO:0007669"/>
    <property type="project" value="Ensembl"/>
</dbReference>
<dbReference type="GO" id="GO:0044877">
    <property type="term" value="F:protein-containing complex binding"/>
    <property type="evidence" value="ECO:0000266"/>
    <property type="project" value="MGI"/>
</dbReference>
<dbReference type="GO" id="GO:0007186">
    <property type="term" value="P:G protein-coupled receptor signaling pathway"/>
    <property type="evidence" value="ECO:0000304"/>
    <property type="project" value="MGI"/>
</dbReference>
<dbReference type="GO" id="GO:1901379">
    <property type="term" value="P:regulation of potassium ion transmembrane transport"/>
    <property type="evidence" value="ECO:0000250"/>
    <property type="project" value="UniProtKB"/>
</dbReference>
<dbReference type="CDD" id="cd00200">
    <property type="entry name" value="WD40"/>
    <property type="match status" value="1"/>
</dbReference>
<dbReference type="FunFam" id="2.130.10.10:FF:000007">
    <property type="entry name" value="Guanine nucleotide-binding protein G(I)/G(S)/G(T) subunit beta-1"/>
    <property type="match status" value="1"/>
</dbReference>
<dbReference type="Gene3D" id="2.130.10.10">
    <property type="entry name" value="YVTN repeat-like/Quinoprotein amine dehydrogenase"/>
    <property type="match status" value="1"/>
</dbReference>
<dbReference type="InterPro" id="IPR020472">
    <property type="entry name" value="G-protein_beta_WD-40_rep"/>
</dbReference>
<dbReference type="InterPro" id="IPR001632">
    <property type="entry name" value="Gprotein_B"/>
</dbReference>
<dbReference type="InterPro" id="IPR016346">
    <property type="entry name" value="Guanine_nucleotide-bd_bsu"/>
</dbReference>
<dbReference type="InterPro" id="IPR015943">
    <property type="entry name" value="WD40/YVTN_repeat-like_dom_sf"/>
</dbReference>
<dbReference type="InterPro" id="IPR019775">
    <property type="entry name" value="WD40_repeat_CS"/>
</dbReference>
<dbReference type="InterPro" id="IPR036322">
    <property type="entry name" value="WD40_repeat_dom_sf"/>
</dbReference>
<dbReference type="InterPro" id="IPR001680">
    <property type="entry name" value="WD40_rpt"/>
</dbReference>
<dbReference type="PANTHER" id="PTHR19850">
    <property type="entry name" value="GUANINE NUCLEOTIDE-BINDING PROTEIN BETA G PROTEIN BETA"/>
    <property type="match status" value="1"/>
</dbReference>
<dbReference type="Pfam" id="PF25391">
    <property type="entry name" value="WD40_Gbeta"/>
    <property type="match status" value="1"/>
</dbReference>
<dbReference type="PIRSF" id="PIRSF002394">
    <property type="entry name" value="GN-bd_beta"/>
    <property type="match status" value="1"/>
</dbReference>
<dbReference type="PRINTS" id="PR00319">
    <property type="entry name" value="GPROTEINB"/>
</dbReference>
<dbReference type="PRINTS" id="PR00320">
    <property type="entry name" value="GPROTEINBRPT"/>
</dbReference>
<dbReference type="SMART" id="SM00320">
    <property type="entry name" value="WD40"/>
    <property type="match status" value="7"/>
</dbReference>
<dbReference type="SUPFAM" id="SSF50978">
    <property type="entry name" value="WD40 repeat-like"/>
    <property type="match status" value="1"/>
</dbReference>
<dbReference type="PROSITE" id="PS00678">
    <property type="entry name" value="WD_REPEATS_1"/>
    <property type="match status" value="3"/>
</dbReference>
<dbReference type="PROSITE" id="PS50082">
    <property type="entry name" value="WD_REPEATS_2"/>
    <property type="match status" value="6"/>
</dbReference>
<dbReference type="PROSITE" id="PS50294">
    <property type="entry name" value="WD_REPEATS_REGION"/>
    <property type="match status" value="1"/>
</dbReference>
<reference key="1">
    <citation type="submission" date="1995-08" db="EMBL/GenBank/DDBJ databases">
        <authorList>
            <person name="Kuroda S."/>
            <person name="Tokunaga C."/>
            <person name="Konishi H."/>
            <person name="Kikkawa U."/>
        </authorList>
    </citation>
    <scope>NUCLEOTIDE SEQUENCE [MRNA]</scope>
    <source>
        <strain>C57BL/Kaplan</strain>
    </source>
</reference>
<reference key="2">
    <citation type="journal article" date="2001" name="DNA Seq.">
        <title>Genomic organization of the murine G protein beta subunit genes and related processed pseudogenes.</title>
        <authorList>
            <person name="Kitanaka J."/>
            <person name="Wang X."/>
            <person name="Kitanaka N."/>
            <person name="Hembree C.M."/>
            <person name="Uhl G.R."/>
        </authorList>
    </citation>
    <scope>NUCLEOTIDE SEQUENCE [GENOMIC DNA]</scope>
    <source>
        <tissue>Liver</tissue>
    </source>
</reference>
<reference key="3">
    <citation type="journal article" date="2001" name="Nucleic Acids Res.">
        <title>Comparative analysis of the gene-dense ACHE/TFR2 region on human chromosome 7q22 with the orthologous region on mouse chromosome 5.</title>
        <authorList>
            <person name="Wilson M.D."/>
            <person name="Riemer C."/>
            <person name="Martindale D.W."/>
            <person name="Schnupf P."/>
            <person name="Boright A.P."/>
            <person name="Cheung T.L."/>
            <person name="Hardy D.M."/>
            <person name="Schwartz S."/>
            <person name="Scherer S.W."/>
            <person name="Tsui L.-C."/>
            <person name="Miller W."/>
            <person name="Koop B.F."/>
        </authorList>
    </citation>
    <scope>NUCLEOTIDE SEQUENCE [GENOMIC DNA]</scope>
    <source>
        <strain>129/Sv</strain>
    </source>
</reference>
<reference key="4">
    <citation type="journal article" date="2004" name="Genome Res.">
        <title>The status, quality, and expansion of the NIH full-length cDNA project: the Mammalian Gene Collection (MGC).</title>
        <authorList>
            <consortium name="The MGC Project Team"/>
        </authorList>
    </citation>
    <scope>NUCLEOTIDE SEQUENCE [LARGE SCALE MRNA]</scope>
    <source>
        <strain>FVB/N</strain>
        <tissue>Colon</tissue>
        <tissue>Embryo</tissue>
    </source>
</reference>
<reference key="5">
    <citation type="submission" date="2007-04" db="UniProtKB">
        <authorList>
            <person name="Lubec G."/>
            <person name="Klug S."/>
            <person name="Kang S.U."/>
        </authorList>
    </citation>
    <scope>PROTEIN SEQUENCE OF 23-42; 58-96; 138-150; 198-209; 257-280 AND 284-301</scope>
    <scope>IDENTIFICATION BY MASS SPECTROMETRY</scope>
    <source>
        <strain>C57BL/6J</strain>
        <tissue>Brain</tissue>
        <tissue>Hippocampus</tissue>
    </source>
</reference>
<reference key="6">
    <citation type="journal article" date="1996" name="Mol. Reprod. Dev.">
        <title>G protein gene expression during mouse oocyte growth and maturation, and preimplantation embryo development.</title>
        <authorList>
            <person name="Williams C.J."/>
            <person name="Schultz R.M."/>
            <person name="Kopf G.S."/>
        </authorList>
    </citation>
    <scope>NUCLEOTIDE SEQUENCE [MRNA] OF 182-297</scope>
    <scope>DEVELOPMENTAL STAGE</scope>
    <source>
        <strain>CF-1</strain>
    </source>
</reference>
<reference key="7">
    <citation type="journal article" date="2008" name="J. Proteome Res.">
        <title>Large-scale identification and evolution indexing of tyrosine phosphorylation sites from murine brain.</title>
        <authorList>
            <person name="Ballif B.A."/>
            <person name="Carey G.R."/>
            <person name="Sunyaev S.R."/>
            <person name="Gygi S.P."/>
        </authorList>
    </citation>
    <scope>PHOSPHORYLATION [LARGE SCALE ANALYSIS] AT TYR-239</scope>
    <scope>IDENTIFICATION BY MASS SPECTROMETRY [LARGE SCALE ANALYSIS]</scope>
    <source>
        <tissue>Brain</tissue>
    </source>
</reference>
<reference key="8">
    <citation type="journal article" date="2010" name="Cell">
        <title>A tissue-specific atlas of mouse protein phosphorylation and expression.</title>
        <authorList>
            <person name="Huttlin E.L."/>
            <person name="Jedrychowski M.P."/>
            <person name="Elias J.E."/>
            <person name="Goswami T."/>
            <person name="Rad R."/>
            <person name="Beausoleil S.A."/>
            <person name="Villen J."/>
            <person name="Haas W."/>
            <person name="Sowa M.E."/>
            <person name="Gygi S.P."/>
        </authorList>
    </citation>
    <scope>IDENTIFICATION BY MASS SPECTROMETRY [LARGE SCALE ANALYSIS]</scope>
    <source>
        <tissue>Brain</tissue>
        <tissue>Brown adipose tissue</tissue>
        <tissue>Heart</tissue>
        <tissue>Kidney</tissue>
        <tissue>Liver</tissue>
        <tissue>Lung</tissue>
        <tissue>Pancreas</tissue>
        <tissue>Spleen</tissue>
        <tissue>Testis</tissue>
    </source>
</reference>
<organism>
    <name type="scientific">Mus musculus</name>
    <name type="common">Mouse</name>
    <dbReference type="NCBI Taxonomy" id="10090"/>
    <lineage>
        <taxon>Eukaryota</taxon>
        <taxon>Metazoa</taxon>
        <taxon>Chordata</taxon>
        <taxon>Craniata</taxon>
        <taxon>Vertebrata</taxon>
        <taxon>Euteleostomi</taxon>
        <taxon>Mammalia</taxon>
        <taxon>Eutheria</taxon>
        <taxon>Euarchontoglires</taxon>
        <taxon>Glires</taxon>
        <taxon>Rodentia</taxon>
        <taxon>Myomorpha</taxon>
        <taxon>Muroidea</taxon>
        <taxon>Muridae</taxon>
        <taxon>Murinae</taxon>
        <taxon>Mus</taxon>
        <taxon>Mus</taxon>
    </lineage>
</organism>
<evidence type="ECO:0000250" key="1">
    <source>
        <dbReference type="UniProtKB" id="P62879"/>
    </source>
</evidence>
<evidence type="ECO:0000269" key="2">
    <source>
    </source>
</evidence>
<evidence type="ECO:0000305" key="3"/>
<evidence type="ECO:0007744" key="4">
    <source>
    </source>
</evidence>
<sequence length="340" mass="37331">MSELEQLRQEAEQLRNQIRDARKACGDSTLTQITAGLDPVGRIQMRTRRTLRGHLAKIYAMHWGTDSRLLVSASQDGKLIIWDSYTTNKVHAIPLRSSWVMTCAYAPSGNFVACGGLDNICSIYSLKTREGNVRVSRELPGHTGYLSCCRFLDDNQIITSSGDTTCALWDIETGQQTVGFAGHSGDVMSLSLAPDGRTFVSGACDASIKLWDVRDSMCRQTFIGHESDINAVAFFPNGYAFTTGSDDATCRLFDLRADQELLMYSHDNIICGITSVAFSRSGRLLLAGYDDFNCNIWDAMKGDRAGVLAGHDNRVSCLGVTDDGMAVATGSWDSFLKIWN</sequence>
<name>GBB2_MOUSE</name>